<name>M3K2_ARATH</name>
<comment type="function">
    <text evidence="6">Involved in cortical microtubules organization and stabilization by regulating the phosphorylation state of microtubule-associated proteins such as MAP65-1.</text>
</comment>
<comment type="catalytic activity">
    <reaction>
        <text>L-seryl-[protein] + ATP = O-phospho-L-seryl-[protein] + ADP + H(+)</text>
        <dbReference type="Rhea" id="RHEA:17989"/>
        <dbReference type="Rhea" id="RHEA-COMP:9863"/>
        <dbReference type="Rhea" id="RHEA-COMP:11604"/>
        <dbReference type="ChEBI" id="CHEBI:15378"/>
        <dbReference type="ChEBI" id="CHEBI:29999"/>
        <dbReference type="ChEBI" id="CHEBI:30616"/>
        <dbReference type="ChEBI" id="CHEBI:83421"/>
        <dbReference type="ChEBI" id="CHEBI:456216"/>
        <dbReference type="EC" id="2.7.11.25"/>
    </reaction>
</comment>
<comment type="catalytic activity">
    <reaction>
        <text>L-threonyl-[protein] + ATP = O-phospho-L-threonyl-[protein] + ADP + H(+)</text>
        <dbReference type="Rhea" id="RHEA:46608"/>
        <dbReference type="Rhea" id="RHEA-COMP:11060"/>
        <dbReference type="Rhea" id="RHEA-COMP:11605"/>
        <dbReference type="ChEBI" id="CHEBI:15378"/>
        <dbReference type="ChEBI" id="CHEBI:30013"/>
        <dbReference type="ChEBI" id="CHEBI:30616"/>
        <dbReference type="ChEBI" id="CHEBI:61977"/>
        <dbReference type="ChEBI" id="CHEBI:456216"/>
        <dbReference type="EC" id="2.7.11.25"/>
    </reaction>
</comment>
<comment type="subcellular location">
    <subcellularLocation>
        <location evidence="8">Cytoplasm</location>
        <location evidence="8">Cytoskeleton</location>
    </subcellularLocation>
</comment>
<comment type="tissue specificity">
    <text evidence="7">Expressed in roots and flowers.</text>
</comment>
<comment type="similarity">
    <text evidence="8">Belongs to the protein kinase superfamily. STE Ser/Thr protein kinase family. MAP kinase kinase kinase subfamily.</text>
</comment>
<comment type="sequence caution" evidence="8">
    <conflict type="erroneous gene model prediction">
        <sequence resource="EMBL-CDS" id="AAG51109"/>
    </conflict>
</comment>
<keyword id="KW-0067">ATP-binding</keyword>
<keyword id="KW-0175">Coiled coil</keyword>
<keyword id="KW-0963">Cytoplasm</keyword>
<keyword id="KW-0206">Cytoskeleton</keyword>
<keyword id="KW-1017">Isopeptide bond</keyword>
<keyword id="KW-0418">Kinase</keyword>
<keyword id="KW-0493">Microtubule</keyword>
<keyword id="KW-0547">Nucleotide-binding</keyword>
<keyword id="KW-1185">Reference proteome</keyword>
<keyword id="KW-0723">Serine/threonine-protein kinase</keyword>
<keyword id="KW-0808">Transferase</keyword>
<keyword id="KW-0832">Ubl conjugation</keyword>
<accession>Q9FZ36</accession>
<accession>F4HYM4</accession>
<accession>O22041</accession>
<accession>Q9C7M0</accession>
<organism>
    <name type="scientific">Arabidopsis thaliana</name>
    <name type="common">Mouse-ear cress</name>
    <dbReference type="NCBI Taxonomy" id="3702"/>
    <lineage>
        <taxon>Eukaryota</taxon>
        <taxon>Viridiplantae</taxon>
        <taxon>Streptophyta</taxon>
        <taxon>Embryophyta</taxon>
        <taxon>Tracheophyta</taxon>
        <taxon>Spermatophyta</taxon>
        <taxon>Magnoliopsida</taxon>
        <taxon>eudicotyledons</taxon>
        <taxon>Gunneridae</taxon>
        <taxon>Pentapetalae</taxon>
        <taxon>rosids</taxon>
        <taxon>malvids</taxon>
        <taxon>Brassicales</taxon>
        <taxon>Brassicaceae</taxon>
        <taxon>Camelineae</taxon>
        <taxon>Arabidopsis</taxon>
    </lineage>
</organism>
<protein>
    <recommendedName>
        <fullName>Mitogen-activated protein kinase kinase kinase 2</fullName>
        <ecNumber>2.7.11.25</ecNumber>
    </recommendedName>
    <alternativeName>
        <fullName>Arabidopsis NPK1-related protein kinase 2</fullName>
    </alternativeName>
</protein>
<reference key="1">
    <citation type="journal article" date="2000" name="Nature">
        <title>Sequence and analysis of chromosome 1 of the plant Arabidopsis thaliana.</title>
        <authorList>
            <person name="Theologis A."/>
            <person name="Ecker J.R."/>
            <person name="Palm C.J."/>
            <person name="Federspiel N.A."/>
            <person name="Kaul S."/>
            <person name="White O."/>
            <person name="Alonso J."/>
            <person name="Altafi H."/>
            <person name="Araujo R."/>
            <person name="Bowman C.L."/>
            <person name="Brooks S.Y."/>
            <person name="Buehler E."/>
            <person name="Chan A."/>
            <person name="Chao Q."/>
            <person name="Chen H."/>
            <person name="Cheuk R.F."/>
            <person name="Chin C.W."/>
            <person name="Chung M.K."/>
            <person name="Conn L."/>
            <person name="Conway A.B."/>
            <person name="Conway A.R."/>
            <person name="Creasy T.H."/>
            <person name="Dewar K."/>
            <person name="Dunn P."/>
            <person name="Etgu P."/>
            <person name="Feldblyum T.V."/>
            <person name="Feng J.-D."/>
            <person name="Fong B."/>
            <person name="Fujii C.Y."/>
            <person name="Gill J.E."/>
            <person name="Goldsmith A.D."/>
            <person name="Haas B."/>
            <person name="Hansen N.F."/>
            <person name="Hughes B."/>
            <person name="Huizar L."/>
            <person name="Hunter J.L."/>
            <person name="Jenkins J."/>
            <person name="Johnson-Hopson C."/>
            <person name="Khan S."/>
            <person name="Khaykin E."/>
            <person name="Kim C.J."/>
            <person name="Koo H.L."/>
            <person name="Kremenetskaia I."/>
            <person name="Kurtz D.B."/>
            <person name="Kwan A."/>
            <person name="Lam B."/>
            <person name="Langin-Hooper S."/>
            <person name="Lee A."/>
            <person name="Lee J.M."/>
            <person name="Lenz C.A."/>
            <person name="Li J.H."/>
            <person name="Li Y.-P."/>
            <person name="Lin X."/>
            <person name="Liu S.X."/>
            <person name="Liu Z.A."/>
            <person name="Luros J.S."/>
            <person name="Maiti R."/>
            <person name="Marziali A."/>
            <person name="Militscher J."/>
            <person name="Miranda M."/>
            <person name="Nguyen M."/>
            <person name="Nierman W.C."/>
            <person name="Osborne B.I."/>
            <person name="Pai G."/>
            <person name="Peterson J."/>
            <person name="Pham P.K."/>
            <person name="Rizzo M."/>
            <person name="Rooney T."/>
            <person name="Rowley D."/>
            <person name="Sakano H."/>
            <person name="Salzberg S.L."/>
            <person name="Schwartz J.R."/>
            <person name="Shinn P."/>
            <person name="Southwick A.M."/>
            <person name="Sun H."/>
            <person name="Tallon L.J."/>
            <person name="Tambunga G."/>
            <person name="Toriumi M.J."/>
            <person name="Town C.D."/>
            <person name="Utterback T."/>
            <person name="Van Aken S."/>
            <person name="Vaysberg M."/>
            <person name="Vysotskaia V.S."/>
            <person name="Walker M."/>
            <person name="Wu D."/>
            <person name="Yu G."/>
            <person name="Fraser C.M."/>
            <person name="Venter J.C."/>
            <person name="Davis R.W."/>
        </authorList>
    </citation>
    <scope>NUCLEOTIDE SEQUENCE [LARGE SCALE GENOMIC DNA]</scope>
    <source>
        <strain>cv. Columbia</strain>
    </source>
</reference>
<reference key="2">
    <citation type="journal article" date="2017" name="Plant J.">
        <title>Araport11: a complete reannotation of the Arabidopsis thaliana reference genome.</title>
        <authorList>
            <person name="Cheng C.Y."/>
            <person name="Krishnakumar V."/>
            <person name="Chan A.P."/>
            <person name="Thibaud-Nissen F."/>
            <person name="Schobel S."/>
            <person name="Town C.D."/>
        </authorList>
    </citation>
    <scope>GENOME REANNOTATION</scope>
    <source>
        <strain>cv. Columbia</strain>
    </source>
</reference>
<reference key="3">
    <citation type="journal article" date="1997" name="Plant J.">
        <title>Possible involvement of differential splicing in regulation of the activity of Arabidopsis ANP1 that is related to mitogen-activated protein kinase kinase kinases (MAPKKKs).</title>
        <authorList>
            <person name="Nishihama R."/>
            <person name="Banno H."/>
            <person name="Kawahara E."/>
            <person name="Irie K."/>
            <person name="Machida Y."/>
        </authorList>
    </citation>
    <scope>NUCLEOTIDE SEQUENCE [MRNA] OF 10-651</scope>
    <scope>TISSUE SPECIFICITY</scope>
    <source>
        <strain>cv. Columbia</strain>
    </source>
</reference>
<reference key="4">
    <citation type="journal article" date="2010" name="Plant Cell">
        <title>Arabidopsis homologs of nucleus- and phragmoplast-localized kinase 2 and 3 and mitogen-activated protein kinase 4 are essential for microtubule organization.</title>
        <authorList>
            <person name="Beck M."/>
            <person name="Komis G."/>
            <person name="Mueller J."/>
            <person name="Menzel D."/>
            <person name="Samaj J."/>
        </authorList>
    </citation>
    <scope>FUNCTION</scope>
</reference>
<feature type="chain" id="PRO_0000086271" description="Mitogen-activated protein kinase kinase kinase 2">
    <location>
        <begin position="1"/>
        <end position="651"/>
    </location>
</feature>
<feature type="domain" description="Protein kinase" evidence="3">
    <location>
        <begin position="68"/>
        <end position="330"/>
    </location>
</feature>
<feature type="region of interest" description="Disordered" evidence="5">
    <location>
        <begin position="460"/>
        <end position="483"/>
    </location>
</feature>
<feature type="region of interest" description="Disordered" evidence="5">
    <location>
        <begin position="537"/>
        <end position="601"/>
    </location>
</feature>
<feature type="region of interest" description="Disordered" evidence="5">
    <location>
        <begin position="618"/>
        <end position="651"/>
    </location>
</feature>
<feature type="coiled-coil region" evidence="2">
    <location>
        <begin position="105"/>
        <end position="130"/>
    </location>
</feature>
<feature type="coiled-coil region" evidence="2">
    <location>
        <begin position="605"/>
        <end position="628"/>
    </location>
</feature>
<feature type="compositionally biased region" description="Basic and acidic residues" evidence="5">
    <location>
        <begin position="464"/>
        <end position="477"/>
    </location>
</feature>
<feature type="compositionally biased region" description="Polar residues" evidence="5">
    <location>
        <begin position="570"/>
        <end position="599"/>
    </location>
</feature>
<feature type="active site" description="Proton acceptor" evidence="3 4">
    <location>
        <position position="196"/>
    </location>
</feature>
<feature type="binding site" evidence="3">
    <location>
        <begin position="74"/>
        <end position="82"/>
    </location>
    <ligand>
        <name>ATP</name>
        <dbReference type="ChEBI" id="CHEBI:30616"/>
    </ligand>
</feature>
<feature type="binding site" evidence="3">
    <location>
        <position position="97"/>
    </location>
    <ligand>
        <name>ATP</name>
        <dbReference type="ChEBI" id="CHEBI:30616"/>
    </ligand>
</feature>
<feature type="cross-link" description="Glycyl lysine isopeptide (Lys-Gly) (interchain with G-Cter in ubiquitin)" evidence="1">
    <location>
        <position position="108"/>
    </location>
</feature>
<feature type="cross-link" description="Glycyl lysine isopeptide (Lys-Gly) (interchain with G-Cter in ubiquitin)" evidence="1">
    <location>
        <position position="110"/>
    </location>
</feature>
<feature type="sequence conflict" description="In Ref. 3; BAA21856." evidence="8" ref="3">
    <original>V</original>
    <variation>A</variation>
    <location>
        <position position="99"/>
    </location>
</feature>
<gene>
    <name type="primary">ANP2</name>
    <name type="ordered locus">At1g54960</name>
    <name type="ORF">F14C21.49</name>
    <name type="ORF">T24C10.7</name>
</gene>
<evidence type="ECO:0000250" key="1">
    <source>
        <dbReference type="UniProtKB" id="O22042"/>
    </source>
</evidence>
<evidence type="ECO:0000255" key="2"/>
<evidence type="ECO:0000255" key="3">
    <source>
        <dbReference type="PROSITE-ProRule" id="PRU00159"/>
    </source>
</evidence>
<evidence type="ECO:0000255" key="4">
    <source>
        <dbReference type="PROSITE-ProRule" id="PRU10027"/>
    </source>
</evidence>
<evidence type="ECO:0000256" key="5">
    <source>
        <dbReference type="SAM" id="MobiDB-lite"/>
    </source>
</evidence>
<evidence type="ECO:0000269" key="6">
    <source>
    </source>
</evidence>
<evidence type="ECO:0000269" key="7">
    <source>
    </source>
</evidence>
<evidence type="ECO:0000305" key="8"/>
<sequence>MQDLFGSVRRSLVFRSTTDDENQENHPPPFPSLLADKITSCIRKSMVFAKSQSPPNNSTVQIKPPIRWRKGQLIGRGAFGTVYMGMNLDSGELLAVKQVLITSNCASKEKTQAHIQELEEEVKLLKNLSHPNIVRYLGTVREDETLNILLEFVPGGSISSLLEKFGAFPESVVRTYTNQLLLGLEYLHNHAIMHRDIKGANILVDNQGCIKLADFGASKQVAELATISGAKSMKGTPYWMAPEVILQTGHSFSADIWSVGCTVIEMVTGKAPWSQQYKEIAAIFHIGTTKSHPPIPDNISSDANDFLLKCLQQEPNLRPTASELLKHPFVTGKQKESASKDLTSFMDNSCSPLPSELTNITSYQTSTSDDVGDICNLGSLTCTLAFPEKSIQNNSLCLKSNNGYDDDDDNDMCLIDDENFLTYNGETGPSLDNNTDAKKSCDTMSEISDILKCKFDENSGNGETETKVSMEVDHPSYSEDENELTESKIKAFLDDKAAELKKLQTPLYEEFYNGMITCSPICMESNINNNKREEAPRGFLKLPPKSRSPSQGHIGRSPSRATDAACCSKSPESGNSSGAPKNSNASAGAEQESNSQSVALSEIERKWKEELDQELERKRREITRQAGMGSSPRDRSLSRHREKSRFASPGK</sequence>
<dbReference type="EC" id="2.7.11.25"/>
<dbReference type="EMBL" id="AC064840">
    <property type="protein sequence ID" value="AAG00876.1"/>
    <property type="molecule type" value="Genomic_DNA"/>
</dbReference>
<dbReference type="EMBL" id="AC069144">
    <property type="protein sequence ID" value="AAG51109.1"/>
    <property type="status" value="ALT_SEQ"/>
    <property type="molecule type" value="Genomic_DNA"/>
</dbReference>
<dbReference type="EMBL" id="CP002684">
    <property type="protein sequence ID" value="AEE33167.2"/>
    <property type="molecule type" value="Genomic_DNA"/>
</dbReference>
<dbReference type="EMBL" id="CP002684">
    <property type="protein sequence ID" value="ANM58828.1"/>
    <property type="molecule type" value="Genomic_DNA"/>
</dbReference>
<dbReference type="EMBL" id="AB000798">
    <property type="protein sequence ID" value="BAA21856.1"/>
    <property type="molecule type" value="mRNA"/>
</dbReference>
<dbReference type="PIR" id="A96591">
    <property type="entry name" value="A96591"/>
</dbReference>
<dbReference type="RefSeq" id="NP_001319236.1">
    <property type="nucleotide sequence ID" value="NM_001333684.1"/>
</dbReference>
<dbReference type="RefSeq" id="NP_175894.5">
    <property type="nucleotide sequence ID" value="NM_104370.5"/>
</dbReference>
<dbReference type="SMR" id="Q9FZ36"/>
<dbReference type="BioGRID" id="27162">
    <property type="interactions" value="1"/>
</dbReference>
<dbReference type="FunCoup" id="Q9FZ36">
    <property type="interactions" value="656"/>
</dbReference>
<dbReference type="STRING" id="3702.Q9FZ36"/>
<dbReference type="iPTMnet" id="Q9FZ36"/>
<dbReference type="PaxDb" id="3702-AT1G54960.1"/>
<dbReference type="ProteomicsDB" id="250818"/>
<dbReference type="EnsemblPlants" id="AT1G54960.1">
    <property type="protein sequence ID" value="AT1G54960.1"/>
    <property type="gene ID" value="AT1G54960"/>
</dbReference>
<dbReference type="EnsemblPlants" id="AT1G54960.2">
    <property type="protein sequence ID" value="AT1G54960.2"/>
    <property type="gene ID" value="AT1G54960"/>
</dbReference>
<dbReference type="GeneID" id="841937"/>
<dbReference type="Gramene" id="AT1G54960.1">
    <property type="protein sequence ID" value="AT1G54960.1"/>
    <property type="gene ID" value="AT1G54960"/>
</dbReference>
<dbReference type="Gramene" id="AT1G54960.2">
    <property type="protein sequence ID" value="AT1G54960.2"/>
    <property type="gene ID" value="AT1G54960"/>
</dbReference>
<dbReference type="KEGG" id="ath:AT1G54960"/>
<dbReference type="Araport" id="AT1G54960"/>
<dbReference type="TAIR" id="AT1G54960">
    <property type="gene designation" value="NP2"/>
</dbReference>
<dbReference type="eggNOG" id="KOG0198">
    <property type="taxonomic scope" value="Eukaryota"/>
</dbReference>
<dbReference type="HOGENOM" id="CLU_020952_1_0_1"/>
<dbReference type="InParanoid" id="Q9FZ36"/>
<dbReference type="OMA" id="CDTMSEI"/>
<dbReference type="PhylomeDB" id="Q9FZ36"/>
<dbReference type="PRO" id="PR:Q9FZ36"/>
<dbReference type="Proteomes" id="UP000006548">
    <property type="component" value="Chromosome 1"/>
</dbReference>
<dbReference type="ExpressionAtlas" id="Q9FZ36">
    <property type="expression patterns" value="baseline and differential"/>
</dbReference>
<dbReference type="GO" id="GO:0005737">
    <property type="term" value="C:cytoplasm"/>
    <property type="evidence" value="ECO:0007669"/>
    <property type="project" value="UniProtKB-KW"/>
</dbReference>
<dbReference type="GO" id="GO:0005874">
    <property type="term" value="C:microtubule"/>
    <property type="evidence" value="ECO:0007669"/>
    <property type="project" value="UniProtKB-KW"/>
</dbReference>
<dbReference type="GO" id="GO:0005524">
    <property type="term" value="F:ATP binding"/>
    <property type="evidence" value="ECO:0007669"/>
    <property type="project" value="UniProtKB-KW"/>
</dbReference>
<dbReference type="GO" id="GO:0004709">
    <property type="term" value="F:MAP kinase kinase kinase activity"/>
    <property type="evidence" value="ECO:0007669"/>
    <property type="project" value="UniProtKB-EC"/>
</dbReference>
<dbReference type="GO" id="GO:0106310">
    <property type="term" value="F:protein serine kinase activity"/>
    <property type="evidence" value="ECO:0007669"/>
    <property type="project" value="RHEA"/>
</dbReference>
<dbReference type="GO" id="GO:0043622">
    <property type="term" value="P:cortical microtubule organization"/>
    <property type="evidence" value="ECO:0000315"/>
    <property type="project" value="UniProtKB"/>
</dbReference>
<dbReference type="CDD" id="cd06606">
    <property type="entry name" value="STKc_MAPKKK"/>
    <property type="match status" value="1"/>
</dbReference>
<dbReference type="FunFam" id="1.10.510.10:FF:000382">
    <property type="entry name" value="Mitogen-activated protein kinase kinase kinase 2"/>
    <property type="match status" value="1"/>
</dbReference>
<dbReference type="FunFam" id="3.30.200.20:FF:000387">
    <property type="entry name" value="Serine/threonine-protein kinase STE11"/>
    <property type="match status" value="1"/>
</dbReference>
<dbReference type="Gene3D" id="1.10.510.10">
    <property type="entry name" value="Transferase(Phosphotransferase) domain 1"/>
    <property type="match status" value="1"/>
</dbReference>
<dbReference type="InterPro" id="IPR011009">
    <property type="entry name" value="Kinase-like_dom_sf"/>
</dbReference>
<dbReference type="InterPro" id="IPR050538">
    <property type="entry name" value="MAP_kinase_kinase_kinase"/>
</dbReference>
<dbReference type="InterPro" id="IPR000719">
    <property type="entry name" value="Prot_kinase_dom"/>
</dbReference>
<dbReference type="InterPro" id="IPR017441">
    <property type="entry name" value="Protein_kinase_ATP_BS"/>
</dbReference>
<dbReference type="InterPro" id="IPR008271">
    <property type="entry name" value="Ser/Thr_kinase_AS"/>
</dbReference>
<dbReference type="PANTHER" id="PTHR48016">
    <property type="entry name" value="MAP KINASE KINASE KINASE SSK2-RELATED-RELATED"/>
    <property type="match status" value="1"/>
</dbReference>
<dbReference type="PANTHER" id="PTHR48016:SF56">
    <property type="entry name" value="MAPKK KINASE"/>
    <property type="match status" value="1"/>
</dbReference>
<dbReference type="Pfam" id="PF00069">
    <property type="entry name" value="Pkinase"/>
    <property type="match status" value="1"/>
</dbReference>
<dbReference type="SMART" id="SM00220">
    <property type="entry name" value="S_TKc"/>
    <property type="match status" value="1"/>
</dbReference>
<dbReference type="SUPFAM" id="SSF56112">
    <property type="entry name" value="Protein kinase-like (PK-like)"/>
    <property type="match status" value="1"/>
</dbReference>
<dbReference type="PROSITE" id="PS00107">
    <property type="entry name" value="PROTEIN_KINASE_ATP"/>
    <property type="match status" value="1"/>
</dbReference>
<dbReference type="PROSITE" id="PS50011">
    <property type="entry name" value="PROTEIN_KINASE_DOM"/>
    <property type="match status" value="1"/>
</dbReference>
<dbReference type="PROSITE" id="PS00108">
    <property type="entry name" value="PROTEIN_KINASE_ST"/>
    <property type="match status" value="1"/>
</dbReference>
<proteinExistence type="evidence at transcript level"/>